<name>RS13_SULTO</name>
<protein>
    <recommendedName>
        <fullName evidence="1">Small ribosomal subunit protein uS13</fullName>
    </recommendedName>
    <alternativeName>
        <fullName evidence="3">30S ribosomal protein S13</fullName>
    </alternativeName>
</protein>
<dbReference type="EMBL" id="BA000023">
    <property type="protein sequence ID" value="BAB67169.1"/>
    <property type="molecule type" value="Genomic_DNA"/>
</dbReference>
<dbReference type="RefSeq" id="WP_010980145.1">
    <property type="nucleotide sequence ID" value="NC_003106.2"/>
</dbReference>
<dbReference type="SMR" id="Q96YV7"/>
<dbReference type="STRING" id="273063.STK_20700"/>
<dbReference type="GeneID" id="1460135"/>
<dbReference type="KEGG" id="sto:STK_20700"/>
<dbReference type="PATRIC" id="fig|273063.9.peg.2358"/>
<dbReference type="eggNOG" id="arCOG01722">
    <property type="taxonomic scope" value="Archaea"/>
</dbReference>
<dbReference type="OrthoDB" id="372127at2157"/>
<dbReference type="Proteomes" id="UP000001015">
    <property type="component" value="Chromosome"/>
</dbReference>
<dbReference type="GO" id="GO:0005829">
    <property type="term" value="C:cytosol"/>
    <property type="evidence" value="ECO:0007669"/>
    <property type="project" value="TreeGrafter"/>
</dbReference>
<dbReference type="GO" id="GO:0015935">
    <property type="term" value="C:small ribosomal subunit"/>
    <property type="evidence" value="ECO:0007669"/>
    <property type="project" value="TreeGrafter"/>
</dbReference>
<dbReference type="GO" id="GO:0019843">
    <property type="term" value="F:rRNA binding"/>
    <property type="evidence" value="ECO:0007669"/>
    <property type="project" value="UniProtKB-UniRule"/>
</dbReference>
<dbReference type="GO" id="GO:0003735">
    <property type="term" value="F:structural constituent of ribosome"/>
    <property type="evidence" value="ECO:0007669"/>
    <property type="project" value="InterPro"/>
</dbReference>
<dbReference type="GO" id="GO:0006412">
    <property type="term" value="P:translation"/>
    <property type="evidence" value="ECO:0007669"/>
    <property type="project" value="UniProtKB-UniRule"/>
</dbReference>
<dbReference type="FunFam" id="1.10.8.50:FF:000001">
    <property type="entry name" value="30S ribosomal protein S13"/>
    <property type="match status" value="1"/>
</dbReference>
<dbReference type="FunFam" id="4.10.910.10:FF:000002">
    <property type="entry name" value="40S ribosomal protein S18"/>
    <property type="match status" value="1"/>
</dbReference>
<dbReference type="Gene3D" id="1.10.8.50">
    <property type="match status" value="1"/>
</dbReference>
<dbReference type="Gene3D" id="4.10.910.10">
    <property type="entry name" value="30s ribosomal protein s13, domain 2"/>
    <property type="match status" value="1"/>
</dbReference>
<dbReference type="HAMAP" id="MF_01315">
    <property type="entry name" value="Ribosomal_uS13"/>
    <property type="match status" value="1"/>
</dbReference>
<dbReference type="InterPro" id="IPR027437">
    <property type="entry name" value="Rbsml_uS13_C"/>
</dbReference>
<dbReference type="InterPro" id="IPR001892">
    <property type="entry name" value="Ribosomal_uS13"/>
</dbReference>
<dbReference type="InterPro" id="IPR010979">
    <property type="entry name" value="Ribosomal_uS13-like_H2TH"/>
</dbReference>
<dbReference type="InterPro" id="IPR019977">
    <property type="entry name" value="Ribosomal_uS13_archaeal"/>
</dbReference>
<dbReference type="InterPro" id="IPR018269">
    <property type="entry name" value="Ribosomal_uS13_CS"/>
</dbReference>
<dbReference type="NCBIfam" id="NF003140">
    <property type="entry name" value="PRK04053.1"/>
    <property type="match status" value="1"/>
</dbReference>
<dbReference type="NCBIfam" id="TIGR03629">
    <property type="entry name" value="uS13_arch"/>
    <property type="match status" value="1"/>
</dbReference>
<dbReference type="PANTHER" id="PTHR10871">
    <property type="entry name" value="30S RIBOSOMAL PROTEIN S13/40S RIBOSOMAL PROTEIN S18"/>
    <property type="match status" value="1"/>
</dbReference>
<dbReference type="PANTHER" id="PTHR10871:SF3">
    <property type="entry name" value="SMALL RIBOSOMAL SUBUNIT PROTEIN US13"/>
    <property type="match status" value="1"/>
</dbReference>
<dbReference type="Pfam" id="PF00416">
    <property type="entry name" value="Ribosomal_S13"/>
    <property type="match status" value="1"/>
</dbReference>
<dbReference type="PIRSF" id="PIRSF002134">
    <property type="entry name" value="Ribosomal_S13"/>
    <property type="match status" value="1"/>
</dbReference>
<dbReference type="SUPFAM" id="SSF46946">
    <property type="entry name" value="S13-like H2TH domain"/>
    <property type="match status" value="1"/>
</dbReference>
<dbReference type="PROSITE" id="PS00646">
    <property type="entry name" value="RIBOSOMAL_S13_1"/>
    <property type="match status" value="1"/>
</dbReference>
<dbReference type="PROSITE" id="PS50159">
    <property type="entry name" value="RIBOSOMAL_S13_2"/>
    <property type="match status" value="1"/>
</dbReference>
<organism>
    <name type="scientific">Sulfurisphaera tokodaii (strain DSM 16993 / JCM 10545 / NBRC 100140 / 7)</name>
    <name type="common">Sulfolobus tokodaii</name>
    <dbReference type="NCBI Taxonomy" id="273063"/>
    <lineage>
        <taxon>Archaea</taxon>
        <taxon>Thermoproteota</taxon>
        <taxon>Thermoprotei</taxon>
        <taxon>Sulfolobales</taxon>
        <taxon>Sulfolobaceae</taxon>
        <taxon>Sulfurisphaera</taxon>
    </lineage>
</organism>
<sequence length="172" mass="19683">MSQQQQFKYIVRLFGQDVDGTMKVPYALAMVKGIGYNTARAIVFKLGLDKDRRLGELSDEDIKKIENYLTDKKILEVPNWMYNRRKDYESGIDMHLVTSDLIFYVRNDIEREKKIKSWRGVRHSLGLKVRGQRTRTTGRTGVTVGVRRSKAAQAAQQQQKAQASSGGEKKQG</sequence>
<evidence type="ECO:0000255" key="1">
    <source>
        <dbReference type="HAMAP-Rule" id="MF_01315"/>
    </source>
</evidence>
<evidence type="ECO:0000256" key="2">
    <source>
        <dbReference type="SAM" id="MobiDB-lite"/>
    </source>
</evidence>
<evidence type="ECO:0000305" key="3"/>
<reference key="1">
    <citation type="journal article" date="2001" name="DNA Res.">
        <title>Complete genome sequence of an aerobic thermoacidophilic Crenarchaeon, Sulfolobus tokodaii strain7.</title>
        <authorList>
            <person name="Kawarabayasi Y."/>
            <person name="Hino Y."/>
            <person name="Horikawa H."/>
            <person name="Jin-no K."/>
            <person name="Takahashi M."/>
            <person name="Sekine M."/>
            <person name="Baba S."/>
            <person name="Ankai A."/>
            <person name="Kosugi H."/>
            <person name="Hosoyama A."/>
            <person name="Fukui S."/>
            <person name="Nagai Y."/>
            <person name="Nishijima K."/>
            <person name="Otsuka R."/>
            <person name="Nakazawa H."/>
            <person name="Takamiya M."/>
            <person name="Kato Y."/>
            <person name="Yoshizawa T."/>
            <person name="Tanaka T."/>
            <person name="Kudoh Y."/>
            <person name="Yamazaki J."/>
            <person name="Kushida N."/>
            <person name="Oguchi A."/>
            <person name="Aoki K."/>
            <person name="Masuda S."/>
            <person name="Yanagii M."/>
            <person name="Nishimura M."/>
            <person name="Yamagishi A."/>
            <person name="Oshima T."/>
            <person name="Kikuchi H."/>
        </authorList>
    </citation>
    <scope>NUCLEOTIDE SEQUENCE [LARGE SCALE GENOMIC DNA]</scope>
    <source>
        <strain>DSM 16993 / JCM 10545 / NBRC 100140 / 7</strain>
    </source>
</reference>
<comment type="function">
    <text evidence="1">Located at the top of the head of the 30S subunit, it contacts several helices of the 16S rRNA. In the 70S ribosome it contacts the 23S rRNA (bridge B1a) and protein L5 of the 50S subunit (bridge B1b), connecting the 2 subunits; these bridges are implicated in subunit movement.</text>
</comment>
<comment type="subunit">
    <text evidence="1">Part of the 30S ribosomal subunit. Forms a loose heterodimer with protein S19. Forms two bridges to the 50S subunit in the 70S ribosome.</text>
</comment>
<comment type="similarity">
    <text evidence="1">Belongs to the universal ribosomal protein uS13 family.</text>
</comment>
<accession>Q96YV7</accession>
<feature type="chain" id="PRO_0000132192" description="Small ribosomal subunit protein uS13">
    <location>
        <begin position="1"/>
        <end position="172"/>
    </location>
</feature>
<feature type="region of interest" description="Disordered" evidence="2">
    <location>
        <begin position="131"/>
        <end position="172"/>
    </location>
</feature>
<feature type="compositionally biased region" description="Low complexity" evidence="2">
    <location>
        <begin position="134"/>
        <end position="163"/>
    </location>
</feature>
<proteinExistence type="inferred from homology"/>
<gene>
    <name evidence="1" type="primary">rps13</name>
    <name type="ordered locus">STK_20700</name>
</gene>
<keyword id="KW-1185">Reference proteome</keyword>
<keyword id="KW-0687">Ribonucleoprotein</keyword>
<keyword id="KW-0689">Ribosomal protein</keyword>
<keyword id="KW-0694">RNA-binding</keyword>
<keyword id="KW-0699">rRNA-binding</keyword>